<sequence>MEVATSSTEITIQTDRDPSSNNNGSCAVASSTASAVFRKIEFHPARKPFNGFSNGRSDFKIETLNPCSSNQRLLSAPSAKKPDSSDLLEHGFEPDLTFSITFRKIGAGLQNLGNTCFLNSVLQCLTYTEPLAATLQTAAHQKYCHVAGFCALCAIQKHVRTARQANGRILAPKDLVSNLRCISRNFRNCRQEDAHEYMINLLECMHKCSLPSGVPSESSDAYRRSLVHKIFGGSLRSQVKCEQCSHCSNKFDPFLDLSLDISKADSLQRALSRFTAVELLDNGAKVYQCERCKQKVKAKKQLTVSKAPYVLTVHLKRFEAHRSEKIDRKVDFTSAIDMKPFVSGPHEGNLKYTLYGVLVHYGRSSHSGHYACFVRTSSGMWYSLDDNRVVQVSEKTVFNQKAYMLFYVRDRQNAVPKNSVPVVKKESFATNRASLIVASNIKDQVNGSTVIKECGFGALVANGLAPLKSCGPSTPAVLTQKDLNAKETQNNAISNVEAKEILETENGSAPVKTCDLAAPTVLVQKDLNTKEIFQKEVPLPQANGEGSLVKEDSKAACLILPEKVSPHLDGSANAQTLVKLPTLGPKAENSVEEKNSLNNLNEPANSLKVINVSVGNPPVEKAVLIDQTMGHHLEESATSIESLKLTSERETLTTPKKTRKPKTKTLKVEFKFFKLALGLRKKKVQRRERLSTTVAGEIISEELLSKKRVKYQDTSLIAPSKMISSSDGAVTSDQQQPVGSSDLSEASQNAKRKRESVLLQKEAVNILTRGVPETVVAKWDEEISASQKRGSKSEGASSIGYVADEWDEEYDRGKKKKIRIKEESYRGPNPFQMLASKRQKETKKKWTQSITDAKTAYRI</sequence>
<evidence type="ECO:0000250" key="1"/>
<evidence type="ECO:0000255" key="2">
    <source>
        <dbReference type="PROSITE-ProRule" id="PRU10092"/>
    </source>
</evidence>
<evidence type="ECO:0000255" key="3">
    <source>
        <dbReference type="PROSITE-ProRule" id="PRU10093"/>
    </source>
</evidence>
<evidence type="ECO:0000256" key="4">
    <source>
        <dbReference type="SAM" id="MobiDB-lite"/>
    </source>
</evidence>
<evidence type="ECO:0000305" key="5"/>
<comment type="function">
    <text evidence="1">Recognizes and hydrolyzes the peptide bond at the C-terminal Gly of ubiquitin. Involved in the processing of poly-ubiquitin precursors as well as that of ubiquitinated proteins (By similarity).</text>
</comment>
<comment type="catalytic activity">
    <reaction>
        <text>Thiol-dependent hydrolysis of ester, thioester, amide, peptide and isopeptide bonds formed by the C-terminal Gly of ubiquitin (a 76-residue protein attached to proteins as an intracellular targeting signal).</text>
        <dbReference type="EC" id="3.4.19.12"/>
    </reaction>
</comment>
<comment type="similarity">
    <text evidence="5">Belongs to the peptidase C19 family.</text>
</comment>
<comment type="sequence caution" evidence="5">
    <conflict type="erroneous gene model prediction">
        <sequence resource="EMBL-CDS" id="BAB08869"/>
    </conflict>
</comment>
<proteinExistence type="evidence at transcript level"/>
<protein>
    <recommendedName>
        <fullName>Ubiquitin carboxyl-terminal hydrolase 23</fullName>
        <ecNumber>3.4.19.12</ecNumber>
    </recommendedName>
    <alternativeName>
        <fullName>Deubiquitinating enzyme 23</fullName>
        <shortName>AtUBP23</shortName>
    </alternativeName>
    <alternativeName>
        <fullName>Ubiquitin thioesterase 23</fullName>
    </alternativeName>
    <alternativeName>
        <fullName>Ubiquitin-specific-processing protease 23</fullName>
    </alternativeName>
</protein>
<accession>Q9FPS4</accession>
<accession>Q9FJL7</accession>
<keyword id="KW-0378">Hydrolase</keyword>
<keyword id="KW-0645">Protease</keyword>
<keyword id="KW-1185">Reference proteome</keyword>
<keyword id="KW-0788">Thiol protease</keyword>
<keyword id="KW-0833">Ubl conjugation pathway</keyword>
<name>UBP23_ARATH</name>
<feature type="chain" id="PRO_0000313049" description="Ubiquitin carboxyl-terminal hydrolase 23">
    <location>
        <begin position="1"/>
        <end position="859"/>
    </location>
</feature>
<feature type="domain" description="USP">
    <location>
        <begin position="107"/>
        <end position="410"/>
    </location>
</feature>
<feature type="region of interest" description="Disordered" evidence="4">
    <location>
        <begin position="1"/>
        <end position="26"/>
    </location>
</feature>
<feature type="region of interest" description="Disordered" evidence="4">
    <location>
        <begin position="722"/>
        <end position="749"/>
    </location>
</feature>
<feature type="region of interest" description="Disordered" evidence="4">
    <location>
        <begin position="822"/>
        <end position="859"/>
    </location>
</feature>
<feature type="compositionally biased region" description="Polar residues" evidence="4">
    <location>
        <begin position="1"/>
        <end position="24"/>
    </location>
</feature>
<feature type="active site" description="Nucleophile" evidence="2 3">
    <location>
        <position position="116"/>
    </location>
</feature>
<feature type="active site" description="Proton acceptor" evidence="2 3">
    <location>
        <position position="369"/>
    </location>
</feature>
<feature type="sequence conflict" description="In Ref. 1; AAG42761." evidence="5" ref="1">
    <original>K</original>
    <variation>N</variation>
    <location>
        <position position="657"/>
    </location>
</feature>
<feature type="sequence conflict" description="In Ref. 1; AAG42761." evidence="5" ref="1">
    <original>K</original>
    <variation>E</variation>
    <location>
        <position position="660"/>
    </location>
</feature>
<organism>
    <name type="scientific">Arabidopsis thaliana</name>
    <name type="common">Mouse-ear cress</name>
    <dbReference type="NCBI Taxonomy" id="3702"/>
    <lineage>
        <taxon>Eukaryota</taxon>
        <taxon>Viridiplantae</taxon>
        <taxon>Streptophyta</taxon>
        <taxon>Embryophyta</taxon>
        <taxon>Tracheophyta</taxon>
        <taxon>Spermatophyta</taxon>
        <taxon>Magnoliopsida</taxon>
        <taxon>eudicotyledons</taxon>
        <taxon>Gunneridae</taxon>
        <taxon>Pentapetalae</taxon>
        <taxon>rosids</taxon>
        <taxon>malvids</taxon>
        <taxon>Brassicales</taxon>
        <taxon>Brassicaceae</taxon>
        <taxon>Camelineae</taxon>
        <taxon>Arabidopsis</taxon>
    </lineage>
</organism>
<reference key="1">
    <citation type="journal article" date="2000" name="Plant Physiol.">
        <title>The ubiquitin-specific protease family from Arabidopsis. AtUBP1 and 2 are required for the resistance to the amino acid analog canavanine.</title>
        <authorList>
            <person name="Yan N."/>
            <person name="Doelling J.H."/>
            <person name="Falbel T.G."/>
            <person name="Durski A.M."/>
            <person name="Vierstra R.D."/>
        </authorList>
    </citation>
    <scope>NUCLEOTIDE SEQUENCE [MRNA]</scope>
    <scope>GENE FAMILY ORGANIZATION</scope>
    <scope>NOMENCLATURE</scope>
    <source>
        <strain>cv. Columbia</strain>
    </source>
</reference>
<reference key="2">
    <citation type="journal article" date="1998" name="DNA Res.">
        <title>Structural analysis of Arabidopsis thaliana chromosome 5. VI. Sequence features of the regions of 1,367,185 bp covered by 19 physically assigned P1 and TAC clones.</title>
        <authorList>
            <person name="Kotani H."/>
            <person name="Nakamura Y."/>
            <person name="Sato S."/>
            <person name="Asamizu E."/>
            <person name="Kaneko T."/>
            <person name="Miyajima N."/>
            <person name="Tabata S."/>
        </authorList>
    </citation>
    <scope>NUCLEOTIDE SEQUENCE [LARGE SCALE GENOMIC DNA]</scope>
    <source>
        <strain>cv. Columbia</strain>
    </source>
</reference>
<reference key="3">
    <citation type="journal article" date="2017" name="Plant J.">
        <title>Araport11: a complete reannotation of the Arabidopsis thaliana reference genome.</title>
        <authorList>
            <person name="Cheng C.Y."/>
            <person name="Krishnakumar V."/>
            <person name="Chan A.P."/>
            <person name="Thibaud-Nissen F."/>
            <person name="Schobel S."/>
            <person name="Town C.D."/>
        </authorList>
    </citation>
    <scope>GENOME REANNOTATION</scope>
    <source>
        <strain>cv. Columbia</strain>
    </source>
</reference>
<dbReference type="EC" id="3.4.19.12"/>
<dbReference type="EMBL" id="AF302671">
    <property type="protein sequence ID" value="AAG42761.1"/>
    <property type="molecule type" value="mRNA"/>
</dbReference>
<dbReference type="EMBL" id="AB013396">
    <property type="protein sequence ID" value="BAB08869.1"/>
    <property type="status" value="ALT_SEQ"/>
    <property type="molecule type" value="Genomic_DNA"/>
</dbReference>
<dbReference type="EMBL" id="CP002688">
    <property type="protein sequence ID" value="AED96982.1"/>
    <property type="molecule type" value="Genomic_DNA"/>
</dbReference>
<dbReference type="RefSeq" id="NP_568873.1">
    <property type="nucleotide sequence ID" value="NM_125184.3"/>
</dbReference>
<dbReference type="SMR" id="Q9FPS4"/>
<dbReference type="FunCoup" id="Q9FPS4">
    <property type="interactions" value="1375"/>
</dbReference>
<dbReference type="STRING" id="3702.Q9FPS4"/>
<dbReference type="MEROPS" id="C19.A12"/>
<dbReference type="PaxDb" id="3702-AT5G57990.1"/>
<dbReference type="ProteomicsDB" id="233068"/>
<dbReference type="EnsemblPlants" id="AT5G57990.1">
    <property type="protein sequence ID" value="AT5G57990.1"/>
    <property type="gene ID" value="AT5G57990"/>
</dbReference>
<dbReference type="GeneID" id="835910"/>
<dbReference type="Gramene" id="AT5G57990.1">
    <property type="protein sequence ID" value="AT5G57990.1"/>
    <property type="gene ID" value="AT5G57990"/>
</dbReference>
<dbReference type="KEGG" id="ath:AT5G57990"/>
<dbReference type="Araport" id="AT5G57990"/>
<dbReference type="TAIR" id="AT5G57990">
    <property type="gene designation" value="UBP23"/>
</dbReference>
<dbReference type="eggNOG" id="KOG1865">
    <property type="taxonomic scope" value="Eukaryota"/>
</dbReference>
<dbReference type="HOGENOM" id="CLU_013307_0_0_1"/>
<dbReference type="InParanoid" id="Q9FPS4"/>
<dbReference type="OMA" id="CEQCSHC"/>
<dbReference type="OrthoDB" id="420187at2759"/>
<dbReference type="PhylomeDB" id="Q9FPS4"/>
<dbReference type="PRO" id="PR:Q9FPS4"/>
<dbReference type="Proteomes" id="UP000006548">
    <property type="component" value="Chromosome 5"/>
</dbReference>
<dbReference type="ExpressionAtlas" id="Q9FPS4">
    <property type="expression patterns" value="baseline and differential"/>
</dbReference>
<dbReference type="GO" id="GO:0004843">
    <property type="term" value="F:cysteine-type deubiquitinase activity"/>
    <property type="evidence" value="ECO:0007669"/>
    <property type="project" value="UniProtKB-EC"/>
</dbReference>
<dbReference type="GO" id="GO:0016579">
    <property type="term" value="P:protein deubiquitination"/>
    <property type="evidence" value="ECO:0007669"/>
    <property type="project" value="InterPro"/>
</dbReference>
<dbReference type="GO" id="GO:0006508">
    <property type="term" value="P:proteolysis"/>
    <property type="evidence" value="ECO:0007669"/>
    <property type="project" value="UniProtKB-KW"/>
</dbReference>
<dbReference type="CDD" id="cd02661">
    <property type="entry name" value="Peptidase_C19E"/>
    <property type="match status" value="1"/>
</dbReference>
<dbReference type="FunFam" id="3.90.70.10:FF:000078">
    <property type="entry name" value="Ubiquitin carboxyl-terminal hydrolase 23"/>
    <property type="match status" value="1"/>
</dbReference>
<dbReference type="Gene3D" id="3.90.70.10">
    <property type="entry name" value="Cysteine proteinases"/>
    <property type="match status" value="1"/>
</dbReference>
<dbReference type="InterPro" id="IPR038765">
    <property type="entry name" value="Papain-like_cys_pep_sf"/>
</dbReference>
<dbReference type="InterPro" id="IPR050164">
    <property type="entry name" value="Peptidase_C19"/>
</dbReference>
<dbReference type="InterPro" id="IPR001394">
    <property type="entry name" value="Peptidase_C19_UCH"/>
</dbReference>
<dbReference type="InterPro" id="IPR018200">
    <property type="entry name" value="USP_CS"/>
</dbReference>
<dbReference type="InterPro" id="IPR028889">
    <property type="entry name" value="USP_dom"/>
</dbReference>
<dbReference type="PANTHER" id="PTHR24006">
    <property type="entry name" value="UBIQUITIN CARBOXYL-TERMINAL HYDROLASE"/>
    <property type="match status" value="1"/>
</dbReference>
<dbReference type="PANTHER" id="PTHR24006:SF663">
    <property type="entry name" value="UBIQUITIN CARBOXYL-TERMINAL HYDROLASE 23"/>
    <property type="match status" value="1"/>
</dbReference>
<dbReference type="Pfam" id="PF00443">
    <property type="entry name" value="UCH"/>
    <property type="match status" value="1"/>
</dbReference>
<dbReference type="SUPFAM" id="SSF54001">
    <property type="entry name" value="Cysteine proteinases"/>
    <property type="match status" value="1"/>
</dbReference>
<dbReference type="PROSITE" id="PS00972">
    <property type="entry name" value="USP_1"/>
    <property type="match status" value="1"/>
</dbReference>
<dbReference type="PROSITE" id="PS00973">
    <property type="entry name" value="USP_2"/>
    <property type="match status" value="1"/>
</dbReference>
<dbReference type="PROSITE" id="PS50235">
    <property type="entry name" value="USP_3"/>
    <property type="match status" value="1"/>
</dbReference>
<gene>
    <name type="primary">UBP23</name>
    <name type="ordered locus">At5g57990</name>
    <name type="ORF">MTI20.25</name>
</gene>